<gene>
    <name evidence="6" type="primary">isoI</name>
    <name evidence="8" type="ORF">SZ00_06093</name>
</gene>
<feature type="chain" id="PRO_0000449973" description="Isoprene-epoxide--glutathione S-transferase">
    <location>
        <begin position="1"/>
        <end position="238"/>
    </location>
</feature>
<feature type="domain" description="GST N-terminal" evidence="1">
    <location>
        <begin position="7"/>
        <end position="82"/>
    </location>
</feature>
<feature type="domain" description="GST C-terminal" evidence="2">
    <location>
        <begin position="118"/>
        <end position="238"/>
    </location>
</feature>
<feature type="sequence conflict" description="In Ref. 3; AA sequence." evidence="7" ref="3">
    <original>S</original>
    <variation>T</variation>
    <location>
        <position position="28"/>
    </location>
</feature>
<organism>
    <name type="scientific">Rhodococcus sp. (strain AD45)</name>
    <dbReference type="NCBI Taxonomy" id="103808"/>
    <lineage>
        <taxon>Bacteria</taxon>
        <taxon>Bacillati</taxon>
        <taxon>Actinomycetota</taxon>
        <taxon>Actinomycetes</taxon>
        <taxon>Mycobacteriales</taxon>
        <taxon>Nocardiaceae</taxon>
        <taxon>Rhodococcus</taxon>
    </lineage>
</organism>
<proteinExistence type="evidence at protein level"/>
<geneLocation type="plasmid" evidence="9">
    <name>unnamed</name>
</geneLocation>
<protein>
    <recommendedName>
        <fullName evidence="7">Isoprene-epoxide--glutathione S-transferase</fullName>
        <ecNumber evidence="3 5">4.4.1.34</ecNumber>
    </recommendedName>
</protein>
<accession>Q9RBP4</accession>
<comment type="function">
    <text evidence="3 4 5">Involved in isoprene degradation (PubMed:10094686, PubMed:10715003, PubMed:9687433). Catalyzes the glutathione-dependent ring opening of various epoxides (PubMed:10094686, PubMed:9687433). The highest conversion rate is observed with the physiological substrate, 3,4-epoxy-3-methyl-1-butene, which is the primary oxidation product of isoprene (PubMed:10094686, PubMed:9687433). It can also use other epoxides, including epoxyethane, epoxypropane, epithiopropane, epichlorohydrin, epifluorohydrin, epibromohydrin, 1,2-epoxybutane, 1,2-epoxyhexane, cis-2,3-epoxybutane, cis-1,2-dichloroepoxyethane and trans-1,2-dichloroepoxyethane (PubMed:10094686, PubMed:9687433).</text>
</comment>
<comment type="catalytic activity">
    <reaction evidence="3 5">
        <text>2-glutathionyl-2-methylbut-3-en-1-ol = (3R)-3,4-epoxy-3-methylbut-1-ene + glutathione</text>
        <dbReference type="Rhea" id="RHEA:49568"/>
        <dbReference type="ChEBI" id="CHEBI:57925"/>
        <dbReference type="ChEBI" id="CHEBI:131718"/>
        <dbReference type="ChEBI" id="CHEBI:131720"/>
        <dbReference type="EC" id="4.4.1.34"/>
    </reaction>
</comment>
<comment type="activity regulation">
    <text evidence="5">Activity is inhibited by 1,2-epoxyhexane.</text>
</comment>
<comment type="biophysicochemical properties">
    <kinetics>
        <KM evidence="3">0.1 mM for 3,4-epoxy-3-methylbut-1-ene</KM>
        <KM evidence="3">0.1 mM for cis-1,2-dichloroepoxyethane</KM>
        <Vmax evidence="3">66.0 umol/min/mg enzyme with 3,4-epoxy-3-methylbut-1-ene as substrate</Vmax>
        <Vmax evidence="3">2.4 umol/min/mg enzyme with cis-1,2-dichloroepoxyethane as substrate</Vmax>
    </kinetics>
    <phDependence>
        <text evidence="3">Optimum pH is 8.5-9.0.</text>
    </phDependence>
</comment>
<comment type="subunit">
    <text evidence="3">Homodimer.</text>
</comment>
<comment type="similarity">
    <text evidence="7">Belongs to the GST superfamily.</text>
</comment>
<reference key="1">
    <citation type="journal article" date="2000" name="J. Bacteriol.">
        <title>Characterization of the gene cluster involved in isoprene metabolism in Rhodococcus sp. strain AD45.</title>
        <authorList>
            <person name="van Hylckama Vlieg J.E."/>
            <person name="Leemhuis H."/>
            <person name="Spelberg J.H."/>
            <person name="Janssen D.B."/>
        </authorList>
    </citation>
    <scope>NUCLEOTIDE SEQUENCE [GENOMIC DNA]</scope>
    <scope>FUNCTION</scope>
    <source>
        <strain>AD45</strain>
    </source>
</reference>
<reference key="2">
    <citation type="journal article" date="2015" name="Environ. Microbiol.">
        <title>Regulation of plasmid-encoded isoprene metabolism in Rhodococcus, a representative of an important link in the global isoprene cycle.</title>
        <authorList>
            <person name="Crombie A.T."/>
            <person name="Khawand M.E."/>
            <person name="Rhodius V.A."/>
            <person name="Fengler K.A."/>
            <person name="Miller M.C."/>
            <person name="Whited G.M."/>
            <person name="McGenity T.J."/>
            <person name="Murrell J.C."/>
        </authorList>
    </citation>
    <scope>NUCLEOTIDE SEQUENCE [LARGE SCALE GENOMIC DNA]</scope>
    <source>
        <strain>AD45</strain>
        <plasmid>unnamed</plasmid>
    </source>
</reference>
<reference key="3">
    <citation type="journal article" date="1999" name="J. Bacteriol.">
        <title>Purification of a glutathione S-transferase and a glutathione conjugate-specific dehydrogenase involved in isoprene metabolism in Rhodococcus sp. strain AD45.</title>
        <authorList>
            <person name="van Hylckama Vlieg J.E."/>
            <person name="Kingma J."/>
            <person name="Kruizinga W."/>
            <person name="Janssen D.B."/>
        </authorList>
    </citation>
    <scope>PROTEIN SEQUENCE OF 1-32</scope>
    <scope>FUNCTION</scope>
    <scope>CATALYTIC ACTIVITY</scope>
    <scope>BIOPHYSICOCHEMICAL PROPERTIES</scope>
    <scope>SUBUNIT</scope>
    <source>
        <strain>AD45</strain>
    </source>
</reference>
<reference key="4">
    <citation type="journal article" date="1998" name="Appl. Environ. Microbiol.">
        <title>A glutathione S-transferase with activity towards cis-1,2-dichloroepoxyethane is involved in isoprene utilization by Rhodococcus sp. strain AD45.</title>
        <authorList>
            <person name="van Hylckama Vlieg J.E."/>
            <person name="Kingma J."/>
            <person name="van den Wijngaard A.J."/>
            <person name="Janssen D.B."/>
        </authorList>
    </citation>
    <scope>FUNCTION</scope>
    <scope>CATALYTIC ACTIVITY</scope>
    <scope>ACTIVITY REGULATION</scope>
    <source>
        <strain>AD45</strain>
    </source>
</reference>
<name>ISOI_RHOSX</name>
<sequence length="238" mass="27094">MITVYGYVPAWGIPDISPYVTKVVNYLSFTGIEFEYKTQDLATLDQDSPHGKLPYIVDSDGTKVGDSNTIIEYLKNKFGDKLDADLSKQQLAQALAFHRLIEEHLYWSGIIQARWQDDAGWETYIPFIVQGAEVTPEMRVGLDAFRARILDGFNGQGMGRRSEEVVAEFFRADIDALSDFLDDKPFILGDKVHSIDASLYSTLRHIADQPQQWLGSGYVQTKPNLVDYLERIRKQYDI</sequence>
<dbReference type="EC" id="4.4.1.34" evidence="3 5"/>
<dbReference type="EMBL" id="AJ249207">
    <property type="protein sequence ID" value="CAB55823.1"/>
    <property type="molecule type" value="Genomic_DNA"/>
</dbReference>
<dbReference type="EMBL" id="JYOP01000009">
    <property type="protein sequence ID" value="KJF19166.1"/>
    <property type="molecule type" value="Genomic_DNA"/>
</dbReference>
<dbReference type="RefSeq" id="WP_045063292.1">
    <property type="nucleotide sequence ID" value="NZ_CM003191.1"/>
</dbReference>
<dbReference type="SMR" id="Q9RBP4"/>
<dbReference type="KEGG" id="ag:CAB55823"/>
<dbReference type="PATRIC" id="fig|103808.5.peg.68"/>
<dbReference type="OrthoDB" id="9810080at2"/>
<dbReference type="BioCyc" id="MetaCyc:MONOMER-19832"/>
<dbReference type="BRENDA" id="4.4.1.34">
    <property type="organism ID" value="5397"/>
</dbReference>
<dbReference type="Proteomes" id="UP000032323">
    <property type="component" value="Plasmid unnamed"/>
</dbReference>
<dbReference type="GO" id="GO:0005737">
    <property type="term" value="C:cytoplasm"/>
    <property type="evidence" value="ECO:0007669"/>
    <property type="project" value="TreeGrafter"/>
</dbReference>
<dbReference type="GO" id="GO:0016829">
    <property type="term" value="F:lyase activity"/>
    <property type="evidence" value="ECO:0007669"/>
    <property type="project" value="UniProtKB-KW"/>
</dbReference>
<dbReference type="CDD" id="cd03193">
    <property type="entry name" value="GST_C_Metaxin"/>
    <property type="match status" value="1"/>
</dbReference>
<dbReference type="Gene3D" id="1.20.1050.10">
    <property type="match status" value="1"/>
</dbReference>
<dbReference type="Gene3D" id="3.40.30.10">
    <property type="entry name" value="Glutaredoxin"/>
    <property type="match status" value="1"/>
</dbReference>
<dbReference type="InterPro" id="IPR026928">
    <property type="entry name" value="FAX/IsoI-like"/>
</dbReference>
<dbReference type="InterPro" id="IPR036282">
    <property type="entry name" value="Glutathione-S-Trfase_C_sf"/>
</dbReference>
<dbReference type="InterPro" id="IPR004045">
    <property type="entry name" value="Glutathione_S-Trfase_N"/>
</dbReference>
<dbReference type="InterPro" id="IPR033468">
    <property type="entry name" value="Metaxin_GST"/>
</dbReference>
<dbReference type="InterPro" id="IPR050931">
    <property type="entry name" value="Mito_Protein_Transport_Metaxin"/>
</dbReference>
<dbReference type="InterPro" id="IPR012336">
    <property type="entry name" value="Thioredoxin-like_fold"/>
</dbReference>
<dbReference type="InterPro" id="IPR036249">
    <property type="entry name" value="Thioredoxin-like_sf"/>
</dbReference>
<dbReference type="PANTHER" id="PTHR12289:SF41">
    <property type="entry name" value="FAILED AXON CONNECTIONS-RELATED"/>
    <property type="match status" value="1"/>
</dbReference>
<dbReference type="PANTHER" id="PTHR12289">
    <property type="entry name" value="METAXIN RELATED"/>
    <property type="match status" value="1"/>
</dbReference>
<dbReference type="Pfam" id="PF17171">
    <property type="entry name" value="GST_C_6"/>
    <property type="match status" value="1"/>
</dbReference>
<dbReference type="Pfam" id="PF17172">
    <property type="entry name" value="GST_N_4"/>
    <property type="match status" value="1"/>
</dbReference>
<dbReference type="SFLD" id="SFLDG01180">
    <property type="entry name" value="SUF1"/>
    <property type="match status" value="1"/>
</dbReference>
<dbReference type="SFLD" id="SFLDG01200">
    <property type="entry name" value="SUF1.1"/>
    <property type="match status" value="1"/>
</dbReference>
<dbReference type="SUPFAM" id="SSF47616">
    <property type="entry name" value="GST C-terminal domain-like"/>
    <property type="match status" value="1"/>
</dbReference>
<dbReference type="SUPFAM" id="SSF52833">
    <property type="entry name" value="Thioredoxin-like"/>
    <property type="match status" value="1"/>
</dbReference>
<dbReference type="PROSITE" id="PS50405">
    <property type="entry name" value="GST_CTER"/>
    <property type="match status" value="1"/>
</dbReference>
<dbReference type="PROSITE" id="PS50404">
    <property type="entry name" value="GST_NTER"/>
    <property type="match status" value="1"/>
</dbReference>
<keyword id="KW-0903">Direct protein sequencing</keyword>
<keyword id="KW-0456">Lyase</keyword>
<keyword id="KW-0614">Plasmid</keyword>
<keyword id="KW-1185">Reference proteome</keyword>
<evidence type="ECO:0000255" key="1">
    <source>
        <dbReference type="PROSITE-ProRule" id="PRU00684"/>
    </source>
</evidence>
<evidence type="ECO:0000255" key="2">
    <source>
        <dbReference type="PROSITE-ProRule" id="PRU00685"/>
    </source>
</evidence>
<evidence type="ECO:0000269" key="3">
    <source>
    </source>
</evidence>
<evidence type="ECO:0000269" key="4">
    <source>
    </source>
</evidence>
<evidence type="ECO:0000269" key="5">
    <source>
    </source>
</evidence>
<evidence type="ECO:0000303" key="6">
    <source>
    </source>
</evidence>
<evidence type="ECO:0000305" key="7"/>
<evidence type="ECO:0000312" key="8">
    <source>
        <dbReference type="EMBL" id="KJF19166.1"/>
    </source>
</evidence>
<evidence type="ECO:0000312" key="9">
    <source>
        <dbReference type="Proteomes" id="UP000032323"/>
    </source>
</evidence>